<organism>
    <name type="scientific">Saccharomyces cerevisiae (strain ATCC 204508 / S288c)</name>
    <name type="common">Baker's yeast</name>
    <dbReference type="NCBI Taxonomy" id="559292"/>
    <lineage>
        <taxon>Eukaryota</taxon>
        <taxon>Fungi</taxon>
        <taxon>Dikarya</taxon>
        <taxon>Ascomycota</taxon>
        <taxon>Saccharomycotina</taxon>
        <taxon>Saccharomycetes</taxon>
        <taxon>Saccharomycetales</taxon>
        <taxon>Saccharomycetaceae</taxon>
        <taxon>Saccharomyces</taxon>
    </lineage>
</organism>
<keyword id="KW-0489">Methyltransferase</keyword>
<keyword id="KW-0539">Nucleus</keyword>
<keyword id="KW-0597">Phosphoprotein</keyword>
<keyword id="KW-1185">Reference proteome</keyword>
<keyword id="KW-0808">Transferase</keyword>
<proteinExistence type="evidence at protein level"/>
<feature type="chain" id="PRO_0000203354" description="Putative methyltransferase YMR310C">
    <location>
        <begin position="1"/>
        <end position="317"/>
    </location>
</feature>
<feature type="modified residue" description="Phosphoserine" evidence="5">
    <location>
        <position position="190"/>
    </location>
</feature>
<accession>Q04867</accession>
<accession>D6W0D7</accession>
<evidence type="ECO:0000269" key="1">
    <source>
    </source>
</evidence>
<evidence type="ECO:0000269" key="2">
    <source>
    </source>
</evidence>
<evidence type="ECO:0000305" key="3"/>
<evidence type="ECO:0000312" key="4">
    <source>
        <dbReference type="SGD" id="S000004927"/>
    </source>
</evidence>
<evidence type="ECO:0007744" key="5">
    <source>
    </source>
</evidence>
<dbReference type="EC" id="2.1.1.-" evidence="3"/>
<dbReference type="EMBL" id="Z54141">
    <property type="protein sequence ID" value="CAA90828.1"/>
    <property type="molecule type" value="Genomic_DNA"/>
</dbReference>
<dbReference type="EMBL" id="BK006946">
    <property type="protein sequence ID" value="DAA10211.1"/>
    <property type="molecule type" value="Genomic_DNA"/>
</dbReference>
<dbReference type="PIR" id="S59303">
    <property type="entry name" value="S59303"/>
</dbReference>
<dbReference type="SMR" id="Q04867"/>
<dbReference type="BioGRID" id="35490">
    <property type="interactions" value="123"/>
</dbReference>
<dbReference type="DIP" id="DIP-5337N"/>
<dbReference type="FunCoup" id="Q04867">
    <property type="interactions" value="1158"/>
</dbReference>
<dbReference type="IntAct" id="Q04867">
    <property type="interactions" value="16"/>
</dbReference>
<dbReference type="MINT" id="Q04867"/>
<dbReference type="STRING" id="4932.YMR310C"/>
<dbReference type="GlyGen" id="Q04867">
    <property type="glycosylation" value="1 site"/>
</dbReference>
<dbReference type="iPTMnet" id="Q04867"/>
<dbReference type="PaxDb" id="4932-YMR310C"/>
<dbReference type="PeptideAtlas" id="Q04867"/>
<dbReference type="EnsemblFungi" id="YMR310C_mRNA">
    <property type="protein sequence ID" value="YMR310C"/>
    <property type="gene ID" value="YMR310C"/>
</dbReference>
<dbReference type="KEGG" id="sce:YMR310C"/>
<dbReference type="AGR" id="SGD:S000004927"/>
<dbReference type="SGD" id="S000004927">
    <property type="gene designation" value="YMR310C"/>
</dbReference>
<dbReference type="VEuPathDB" id="FungiDB:YMR310C"/>
<dbReference type="eggNOG" id="KOG3925">
    <property type="taxonomic scope" value="Eukaryota"/>
</dbReference>
<dbReference type="GeneTree" id="ENSGT00390000016537"/>
<dbReference type="HOGENOM" id="CLU_061859_0_0_1"/>
<dbReference type="InParanoid" id="Q04867"/>
<dbReference type="OMA" id="MQNNEVY"/>
<dbReference type="OrthoDB" id="361029at2759"/>
<dbReference type="BioCyc" id="YEAST:G3O-32974-MONOMER"/>
<dbReference type="BioGRID-ORCS" id="855358">
    <property type="hits" value="4 hits in 10 CRISPR screens"/>
</dbReference>
<dbReference type="PRO" id="PR:Q04867"/>
<dbReference type="Proteomes" id="UP000002311">
    <property type="component" value="Chromosome XIII"/>
</dbReference>
<dbReference type="RNAct" id="Q04867">
    <property type="molecule type" value="protein"/>
</dbReference>
<dbReference type="GO" id="GO:0005634">
    <property type="term" value="C:nucleus"/>
    <property type="evidence" value="ECO:0007005"/>
    <property type="project" value="SGD"/>
</dbReference>
<dbReference type="GO" id="GO:0008168">
    <property type="term" value="F:methyltransferase activity"/>
    <property type="evidence" value="ECO:0000250"/>
    <property type="project" value="SGD"/>
</dbReference>
<dbReference type="GO" id="GO:0032259">
    <property type="term" value="P:methylation"/>
    <property type="evidence" value="ECO:0000305"/>
    <property type="project" value="SGD"/>
</dbReference>
<dbReference type="CDD" id="cd18086">
    <property type="entry name" value="HsC9orf114-like"/>
    <property type="match status" value="1"/>
</dbReference>
<dbReference type="FunFam" id="3.40.1280.10:FF:000040">
    <property type="entry name" value="YMR310C-like protein"/>
    <property type="match status" value="1"/>
</dbReference>
<dbReference type="Gene3D" id="3.40.1280.10">
    <property type="match status" value="1"/>
</dbReference>
<dbReference type="InterPro" id="IPR029028">
    <property type="entry name" value="Alpha/beta_knot_MTases"/>
</dbReference>
<dbReference type="InterPro" id="IPR003750">
    <property type="entry name" value="Put_MeTrfase-C9orf114-like"/>
</dbReference>
<dbReference type="InterPro" id="IPR029026">
    <property type="entry name" value="tRNA_m1G_MTases_N"/>
</dbReference>
<dbReference type="PANTHER" id="PTHR12150">
    <property type="entry name" value="CLASS IV SAM-BINDING METHYLTRANSFERASE-RELATED"/>
    <property type="match status" value="1"/>
</dbReference>
<dbReference type="PANTHER" id="PTHR12150:SF13">
    <property type="entry name" value="METHYLTRANSFERASE C9ORF114-RELATED"/>
    <property type="match status" value="1"/>
</dbReference>
<dbReference type="Pfam" id="PF02598">
    <property type="entry name" value="Methyltrn_RNA_3"/>
    <property type="match status" value="1"/>
</dbReference>
<dbReference type="SUPFAM" id="SSF75217">
    <property type="entry name" value="alpha/beta knot"/>
    <property type="match status" value="1"/>
</dbReference>
<sequence length="317" mass="35852">MSSTRKFKKVEKPLSQTRHYSLCIPTTLVSDCRNLSQITHKVYQVAKFASLFNVSEVVILEDNSQVDATKKKISTAKLILALLQYFVTPPYLRNTVFNEKFRPYLTAASKLPRLSTLPFTRYQKQDHGRYREGLTIKMQKPTLARKKIGKVFKQTKYINIGKSKALALQSQLVPINARVTIDTITRKIVSPQEAYGDFTGLDSQYGYYTRIASSFTDLFMKGPLKEGYTQSVYVPLTTRDTSIPELSSLPTAETNPHILLVFSTWDTLARAFKLDQDQFVDCQGPQEFFDAQLPCPVSNSDVADAIPMTLTTLSTVF</sequence>
<comment type="subcellular location">
    <subcellularLocation>
        <location evidence="1">Nucleus</location>
    </subcellularLocation>
</comment>
<comment type="miscellaneous">
    <text evidence="2">Present with 2540 molecules/cell in log phase SD medium.</text>
</comment>
<comment type="similarity">
    <text evidence="3">Belongs to the class IV-like SAM-binding methyltransferase superfamily.</text>
</comment>
<name>YM91_YEAST</name>
<protein>
    <recommendedName>
        <fullName evidence="3">Putative methyltransferase YMR310C</fullName>
        <ecNumber evidence="3">2.1.1.-</ecNumber>
    </recommendedName>
</protein>
<gene>
    <name evidence="4" type="ordered locus">YMR310C</name>
    <name type="ORF">YM9924.02C</name>
</gene>
<reference key="1">
    <citation type="journal article" date="1997" name="Nature">
        <title>The nucleotide sequence of Saccharomyces cerevisiae chromosome XIII.</title>
        <authorList>
            <person name="Bowman S."/>
            <person name="Churcher C.M."/>
            <person name="Badcock K."/>
            <person name="Brown D."/>
            <person name="Chillingworth T."/>
            <person name="Connor R."/>
            <person name="Dedman K."/>
            <person name="Devlin K."/>
            <person name="Gentles S."/>
            <person name="Hamlin N."/>
            <person name="Hunt S."/>
            <person name="Jagels K."/>
            <person name="Lye G."/>
            <person name="Moule S."/>
            <person name="Odell C."/>
            <person name="Pearson D."/>
            <person name="Rajandream M.A."/>
            <person name="Rice P."/>
            <person name="Skelton J."/>
            <person name="Walsh S.V."/>
            <person name="Whitehead S."/>
            <person name="Barrell B.G."/>
        </authorList>
    </citation>
    <scope>NUCLEOTIDE SEQUENCE [LARGE SCALE GENOMIC DNA]</scope>
    <source>
        <strain>ATCC 204508 / S288c</strain>
    </source>
</reference>
<reference key="2">
    <citation type="journal article" date="2014" name="G3 (Bethesda)">
        <title>The reference genome sequence of Saccharomyces cerevisiae: Then and now.</title>
        <authorList>
            <person name="Engel S.R."/>
            <person name="Dietrich F.S."/>
            <person name="Fisk D.G."/>
            <person name="Binkley G."/>
            <person name="Balakrishnan R."/>
            <person name="Costanzo M.C."/>
            <person name="Dwight S.S."/>
            <person name="Hitz B.C."/>
            <person name="Karra K."/>
            <person name="Nash R.S."/>
            <person name="Weng S."/>
            <person name="Wong E.D."/>
            <person name="Lloyd P."/>
            <person name="Skrzypek M.S."/>
            <person name="Miyasato S.R."/>
            <person name="Simison M."/>
            <person name="Cherry J.M."/>
        </authorList>
    </citation>
    <scope>GENOME REANNOTATION</scope>
    <source>
        <strain>ATCC 204508 / S288c</strain>
    </source>
</reference>
<reference key="3">
    <citation type="journal article" date="2003" name="Nature">
        <title>Global analysis of protein localization in budding yeast.</title>
        <authorList>
            <person name="Huh W.-K."/>
            <person name="Falvo J.V."/>
            <person name="Gerke L.C."/>
            <person name="Carroll A.S."/>
            <person name="Howson R.W."/>
            <person name="Weissman J.S."/>
            <person name="O'Shea E.K."/>
        </authorList>
    </citation>
    <scope>SUBCELLULAR LOCATION [LARGE SCALE ANALYSIS]</scope>
</reference>
<reference key="4">
    <citation type="journal article" date="2003" name="Nature">
        <title>Global analysis of protein expression in yeast.</title>
        <authorList>
            <person name="Ghaemmaghami S."/>
            <person name="Huh W.-K."/>
            <person name="Bower K."/>
            <person name="Howson R.W."/>
            <person name="Belle A."/>
            <person name="Dephoure N."/>
            <person name="O'Shea E.K."/>
            <person name="Weissman J.S."/>
        </authorList>
    </citation>
    <scope>LEVEL OF PROTEIN EXPRESSION [LARGE SCALE ANALYSIS]</scope>
</reference>
<reference key="5">
    <citation type="journal article" date="2008" name="Mol. Cell. Proteomics">
        <title>A multidimensional chromatography technology for in-depth phosphoproteome analysis.</title>
        <authorList>
            <person name="Albuquerque C.P."/>
            <person name="Smolka M.B."/>
            <person name="Payne S.H."/>
            <person name="Bafna V."/>
            <person name="Eng J."/>
            <person name="Zhou H."/>
        </authorList>
    </citation>
    <scope>PHOSPHORYLATION [LARGE SCALE ANALYSIS] AT SER-190</scope>
    <scope>IDENTIFICATION BY MASS SPECTROMETRY [LARGE SCALE ANALYSIS]</scope>
</reference>